<accession>A2RNN1</accession>
<reference key="1">
    <citation type="journal article" date="2007" name="J. Bacteriol.">
        <title>The complete genome sequence of the lactic acid bacterial paradigm Lactococcus lactis subsp. cremoris MG1363.</title>
        <authorList>
            <person name="Wegmann U."/>
            <person name="O'Connell-Motherway M."/>
            <person name="Zomer A."/>
            <person name="Buist G."/>
            <person name="Shearman C."/>
            <person name="Canchaya C."/>
            <person name="Ventura M."/>
            <person name="Goesmann A."/>
            <person name="Gasson M.J."/>
            <person name="Kuipers O.P."/>
            <person name="van Sinderen D."/>
            <person name="Kok J."/>
        </authorList>
    </citation>
    <scope>NUCLEOTIDE SEQUENCE [LARGE SCALE GENOMIC DNA]</scope>
    <source>
        <strain>MG1363</strain>
    </source>
</reference>
<proteinExistence type="inferred from homology"/>
<evidence type="ECO:0000255" key="1">
    <source>
        <dbReference type="HAMAP-Rule" id="MF_00075"/>
    </source>
</evidence>
<sequence length="72" mass="8196">MAKDDVIEVDGKVVDTMPNAMFTVELENGHQVLATISGKIRKNYIRILPGDKVQVELSPYDLTRGRITYRFK</sequence>
<protein>
    <recommendedName>
        <fullName evidence="1">Translation initiation factor IF-1</fullName>
    </recommendedName>
</protein>
<comment type="function">
    <text evidence="1">One of the essential components for the initiation of protein synthesis. Stabilizes the binding of IF-2 and IF-3 on the 30S subunit to which N-formylmethionyl-tRNA(fMet) subsequently binds. Helps modulate mRNA selection, yielding the 30S pre-initiation complex (PIC). Upon addition of the 50S ribosomal subunit IF-1, IF-2 and IF-3 are released leaving the mature 70S translation initiation complex.</text>
</comment>
<comment type="subunit">
    <text evidence="1">Component of the 30S ribosomal translation pre-initiation complex which assembles on the 30S ribosome in the order IF-2 and IF-3, IF-1 and N-formylmethionyl-tRNA(fMet); mRNA recruitment can occur at any time during PIC assembly.</text>
</comment>
<comment type="subcellular location">
    <subcellularLocation>
        <location evidence="1">Cytoplasm</location>
    </subcellularLocation>
</comment>
<comment type="similarity">
    <text evidence="1">Belongs to the IF-1 family.</text>
</comment>
<keyword id="KW-0963">Cytoplasm</keyword>
<keyword id="KW-0396">Initiation factor</keyword>
<keyword id="KW-0648">Protein biosynthesis</keyword>
<keyword id="KW-0694">RNA-binding</keyword>
<keyword id="KW-0699">rRNA-binding</keyword>
<dbReference type="EMBL" id="AM406671">
    <property type="protein sequence ID" value="CAL98922.1"/>
    <property type="molecule type" value="Genomic_DNA"/>
</dbReference>
<dbReference type="RefSeq" id="WP_003130554.1">
    <property type="nucleotide sequence ID" value="NZ_WJVF01000005.1"/>
</dbReference>
<dbReference type="SMR" id="A2RNN1"/>
<dbReference type="STRING" id="416870.llmg_2358"/>
<dbReference type="GeneID" id="89634424"/>
<dbReference type="KEGG" id="llm:llmg_2358"/>
<dbReference type="eggNOG" id="COG0361">
    <property type="taxonomic scope" value="Bacteria"/>
</dbReference>
<dbReference type="HOGENOM" id="CLU_151267_1_0_9"/>
<dbReference type="OrthoDB" id="9803250at2"/>
<dbReference type="PhylomeDB" id="A2RNN1"/>
<dbReference type="Proteomes" id="UP000000364">
    <property type="component" value="Chromosome"/>
</dbReference>
<dbReference type="GO" id="GO:0005829">
    <property type="term" value="C:cytosol"/>
    <property type="evidence" value="ECO:0007669"/>
    <property type="project" value="TreeGrafter"/>
</dbReference>
<dbReference type="GO" id="GO:0043022">
    <property type="term" value="F:ribosome binding"/>
    <property type="evidence" value="ECO:0007669"/>
    <property type="project" value="UniProtKB-UniRule"/>
</dbReference>
<dbReference type="GO" id="GO:0019843">
    <property type="term" value="F:rRNA binding"/>
    <property type="evidence" value="ECO:0007669"/>
    <property type="project" value="UniProtKB-UniRule"/>
</dbReference>
<dbReference type="GO" id="GO:0003743">
    <property type="term" value="F:translation initiation factor activity"/>
    <property type="evidence" value="ECO:0007669"/>
    <property type="project" value="UniProtKB-UniRule"/>
</dbReference>
<dbReference type="CDD" id="cd04451">
    <property type="entry name" value="S1_IF1"/>
    <property type="match status" value="1"/>
</dbReference>
<dbReference type="FunFam" id="2.40.50.140:FF:000002">
    <property type="entry name" value="Translation initiation factor IF-1"/>
    <property type="match status" value="1"/>
</dbReference>
<dbReference type="Gene3D" id="2.40.50.140">
    <property type="entry name" value="Nucleic acid-binding proteins"/>
    <property type="match status" value="1"/>
</dbReference>
<dbReference type="HAMAP" id="MF_00075">
    <property type="entry name" value="IF_1"/>
    <property type="match status" value="1"/>
</dbReference>
<dbReference type="InterPro" id="IPR012340">
    <property type="entry name" value="NA-bd_OB-fold"/>
</dbReference>
<dbReference type="InterPro" id="IPR006196">
    <property type="entry name" value="RNA-binding_domain_S1_IF1"/>
</dbReference>
<dbReference type="InterPro" id="IPR003029">
    <property type="entry name" value="S1_domain"/>
</dbReference>
<dbReference type="InterPro" id="IPR004368">
    <property type="entry name" value="TIF_IF1"/>
</dbReference>
<dbReference type="NCBIfam" id="TIGR00008">
    <property type="entry name" value="infA"/>
    <property type="match status" value="1"/>
</dbReference>
<dbReference type="PANTHER" id="PTHR33370">
    <property type="entry name" value="TRANSLATION INITIATION FACTOR IF-1, CHLOROPLASTIC"/>
    <property type="match status" value="1"/>
</dbReference>
<dbReference type="PANTHER" id="PTHR33370:SF1">
    <property type="entry name" value="TRANSLATION INITIATION FACTOR IF-1, CHLOROPLASTIC"/>
    <property type="match status" value="1"/>
</dbReference>
<dbReference type="Pfam" id="PF01176">
    <property type="entry name" value="eIF-1a"/>
    <property type="match status" value="1"/>
</dbReference>
<dbReference type="SMART" id="SM00316">
    <property type="entry name" value="S1"/>
    <property type="match status" value="1"/>
</dbReference>
<dbReference type="SUPFAM" id="SSF50249">
    <property type="entry name" value="Nucleic acid-binding proteins"/>
    <property type="match status" value="1"/>
</dbReference>
<dbReference type="PROSITE" id="PS50832">
    <property type="entry name" value="S1_IF1_TYPE"/>
    <property type="match status" value="1"/>
</dbReference>
<feature type="chain" id="PRO_0000338849" description="Translation initiation factor IF-1">
    <location>
        <begin position="1"/>
        <end position="72"/>
    </location>
</feature>
<feature type="domain" description="S1-like" evidence="1">
    <location>
        <begin position="1"/>
        <end position="72"/>
    </location>
</feature>
<name>IF1_LACLM</name>
<gene>
    <name evidence="1" type="primary">infA</name>
    <name type="ordered locus">llmg_2358</name>
</gene>
<organism>
    <name type="scientific">Lactococcus lactis subsp. cremoris (strain MG1363)</name>
    <dbReference type="NCBI Taxonomy" id="416870"/>
    <lineage>
        <taxon>Bacteria</taxon>
        <taxon>Bacillati</taxon>
        <taxon>Bacillota</taxon>
        <taxon>Bacilli</taxon>
        <taxon>Lactobacillales</taxon>
        <taxon>Streptococcaceae</taxon>
        <taxon>Lactococcus</taxon>
        <taxon>Lactococcus cremoris subsp. cremoris</taxon>
    </lineage>
</organism>